<keyword id="KW-0143">Chaperone</keyword>
<keyword id="KW-0963">Cytoplasm</keyword>
<keyword id="KW-0533">Nickel</keyword>
<keyword id="KW-0996">Nickel insertion</keyword>
<protein>
    <recommendedName>
        <fullName evidence="1">Urease accessory protein UreE</fullName>
    </recommendedName>
</protein>
<proteinExistence type="inferred from homology"/>
<reference key="1">
    <citation type="journal article" date="2007" name="Microbiology">
        <title>Comparative analysis of the Corynebacterium glutamicum group and complete genome sequence of strain R.</title>
        <authorList>
            <person name="Yukawa H."/>
            <person name="Omumasaba C.A."/>
            <person name="Nonaka H."/>
            <person name="Kos P."/>
            <person name="Okai N."/>
            <person name="Suzuki N."/>
            <person name="Suda M."/>
            <person name="Tsuge Y."/>
            <person name="Watanabe J."/>
            <person name="Ikeda Y."/>
            <person name="Vertes A.A."/>
            <person name="Inui M."/>
        </authorList>
    </citation>
    <scope>NUCLEOTIDE SEQUENCE [LARGE SCALE GENOMIC DNA]</scope>
    <source>
        <strain>R</strain>
    </source>
</reference>
<feature type="chain" id="PRO_1000062544" description="Urease accessory protein UreE">
    <location>
        <begin position="1"/>
        <end position="157"/>
    </location>
</feature>
<dbReference type="EMBL" id="AP009044">
    <property type="protein sequence ID" value="BAF53067.1"/>
    <property type="molecule type" value="Genomic_DNA"/>
</dbReference>
<dbReference type="RefSeq" id="WP_011896412.1">
    <property type="nucleotide sequence ID" value="NC_009342.1"/>
</dbReference>
<dbReference type="SMR" id="A4QA24"/>
<dbReference type="KEGG" id="cgt:cgR_0106"/>
<dbReference type="HOGENOM" id="CLU_093757_3_1_11"/>
<dbReference type="PhylomeDB" id="A4QA24"/>
<dbReference type="Proteomes" id="UP000006698">
    <property type="component" value="Chromosome"/>
</dbReference>
<dbReference type="GO" id="GO:0005737">
    <property type="term" value="C:cytoplasm"/>
    <property type="evidence" value="ECO:0007669"/>
    <property type="project" value="UniProtKB-SubCell"/>
</dbReference>
<dbReference type="GO" id="GO:0016151">
    <property type="term" value="F:nickel cation binding"/>
    <property type="evidence" value="ECO:0007669"/>
    <property type="project" value="UniProtKB-UniRule"/>
</dbReference>
<dbReference type="GO" id="GO:0051082">
    <property type="term" value="F:unfolded protein binding"/>
    <property type="evidence" value="ECO:0007669"/>
    <property type="project" value="UniProtKB-UniRule"/>
</dbReference>
<dbReference type="GO" id="GO:0006457">
    <property type="term" value="P:protein folding"/>
    <property type="evidence" value="ECO:0007669"/>
    <property type="project" value="InterPro"/>
</dbReference>
<dbReference type="GO" id="GO:0065003">
    <property type="term" value="P:protein-containing complex assembly"/>
    <property type="evidence" value="ECO:0007669"/>
    <property type="project" value="InterPro"/>
</dbReference>
<dbReference type="GO" id="GO:0019627">
    <property type="term" value="P:urea metabolic process"/>
    <property type="evidence" value="ECO:0007669"/>
    <property type="project" value="InterPro"/>
</dbReference>
<dbReference type="CDD" id="cd00571">
    <property type="entry name" value="UreE"/>
    <property type="match status" value="1"/>
</dbReference>
<dbReference type="Gene3D" id="2.60.260.20">
    <property type="entry name" value="Urease metallochaperone UreE, N-terminal domain"/>
    <property type="match status" value="1"/>
</dbReference>
<dbReference type="Gene3D" id="3.30.70.790">
    <property type="entry name" value="UreE, C-terminal domain"/>
    <property type="match status" value="1"/>
</dbReference>
<dbReference type="HAMAP" id="MF_00822">
    <property type="entry name" value="UreE"/>
    <property type="match status" value="1"/>
</dbReference>
<dbReference type="InterPro" id="IPR012406">
    <property type="entry name" value="UreE"/>
</dbReference>
<dbReference type="InterPro" id="IPR007864">
    <property type="entry name" value="UreE_C_dom"/>
</dbReference>
<dbReference type="InterPro" id="IPR004029">
    <property type="entry name" value="UreE_N"/>
</dbReference>
<dbReference type="InterPro" id="IPR036118">
    <property type="entry name" value="UreE_N_sf"/>
</dbReference>
<dbReference type="NCBIfam" id="NF009757">
    <property type="entry name" value="PRK13261.2-3"/>
    <property type="match status" value="1"/>
</dbReference>
<dbReference type="Pfam" id="PF05194">
    <property type="entry name" value="UreE_C"/>
    <property type="match status" value="1"/>
</dbReference>
<dbReference type="Pfam" id="PF02814">
    <property type="entry name" value="UreE_N"/>
    <property type="match status" value="1"/>
</dbReference>
<dbReference type="PIRSF" id="PIRSF036402">
    <property type="entry name" value="Ureas_acces_UreE"/>
    <property type="match status" value="1"/>
</dbReference>
<dbReference type="SMART" id="SM00988">
    <property type="entry name" value="UreE_N"/>
    <property type="match status" value="1"/>
</dbReference>
<dbReference type="SUPFAM" id="SSF69737">
    <property type="entry name" value="Urease metallochaperone UreE, C-terminal domain"/>
    <property type="match status" value="1"/>
</dbReference>
<dbReference type="SUPFAM" id="SSF69287">
    <property type="entry name" value="Urease metallochaperone UreE, N-terminal domain"/>
    <property type="match status" value="1"/>
</dbReference>
<sequence length="157" mass="17678">MIITAIDTNIYDQPEFVEGRDVIGVRFEDLVLDKRIQRVALSGGEELGLRLNHGHPILREGDVLKADDKTVFVVEIIPTDVLVITPSDIHQMGFVAHSLGNRHLPAQFSKPGELTEKAAMIVQYDHTVVSFLDDHDIEYQRTELVPPIPFRHSGHTH</sequence>
<organism>
    <name type="scientific">Corynebacterium glutamicum (strain R)</name>
    <dbReference type="NCBI Taxonomy" id="340322"/>
    <lineage>
        <taxon>Bacteria</taxon>
        <taxon>Bacillati</taxon>
        <taxon>Actinomycetota</taxon>
        <taxon>Actinomycetes</taxon>
        <taxon>Mycobacteriales</taxon>
        <taxon>Corynebacteriaceae</taxon>
        <taxon>Corynebacterium</taxon>
    </lineage>
</organism>
<accession>A4QA24</accession>
<name>UREE_CORGB</name>
<comment type="function">
    <text evidence="1">Involved in urease metallocenter assembly. Binds nickel. Probably functions as a nickel donor during metallocenter assembly.</text>
</comment>
<comment type="subcellular location">
    <subcellularLocation>
        <location evidence="1">Cytoplasm</location>
    </subcellularLocation>
</comment>
<comment type="similarity">
    <text evidence="1">Belongs to the UreE family.</text>
</comment>
<evidence type="ECO:0000255" key="1">
    <source>
        <dbReference type="HAMAP-Rule" id="MF_00822"/>
    </source>
</evidence>
<gene>
    <name evidence="1" type="primary">ureE</name>
    <name type="ordered locus">cgR_0106</name>
</gene>